<feature type="chain" id="PRO_0000266114" description="CTP synthase">
    <location>
        <begin position="1"/>
        <end position="540"/>
    </location>
</feature>
<feature type="domain" description="Glutamine amidotransferase type-1" evidence="1">
    <location>
        <begin position="295"/>
        <end position="537"/>
    </location>
</feature>
<feature type="region of interest" description="Amidoligase domain" evidence="1">
    <location>
        <begin position="1"/>
        <end position="270"/>
    </location>
</feature>
<feature type="active site" description="Nucleophile; for glutamine hydrolysis" evidence="1">
    <location>
        <position position="383"/>
    </location>
</feature>
<feature type="active site" evidence="1">
    <location>
        <position position="510"/>
    </location>
</feature>
<feature type="active site" evidence="1">
    <location>
        <position position="512"/>
    </location>
</feature>
<feature type="binding site" evidence="1">
    <location>
        <position position="18"/>
    </location>
    <ligand>
        <name>CTP</name>
        <dbReference type="ChEBI" id="CHEBI:37563"/>
        <note>allosteric inhibitor</note>
    </ligand>
</feature>
<feature type="binding site" evidence="1">
    <location>
        <position position="18"/>
    </location>
    <ligand>
        <name>UTP</name>
        <dbReference type="ChEBI" id="CHEBI:46398"/>
    </ligand>
</feature>
<feature type="binding site" evidence="1">
    <location>
        <begin position="19"/>
        <end position="24"/>
    </location>
    <ligand>
        <name>ATP</name>
        <dbReference type="ChEBI" id="CHEBI:30616"/>
    </ligand>
</feature>
<feature type="binding site" evidence="1">
    <location>
        <position position="76"/>
    </location>
    <ligand>
        <name>ATP</name>
        <dbReference type="ChEBI" id="CHEBI:30616"/>
    </ligand>
</feature>
<feature type="binding site" evidence="1">
    <location>
        <position position="76"/>
    </location>
    <ligand>
        <name>Mg(2+)</name>
        <dbReference type="ChEBI" id="CHEBI:18420"/>
    </ligand>
</feature>
<feature type="binding site" evidence="1">
    <location>
        <position position="144"/>
    </location>
    <ligand>
        <name>Mg(2+)</name>
        <dbReference type="ChEBI" id="CHEBI:18420"/>
    </ligand>
</feature>
<feature type="binding site" evidence="1">
    <location>
        <begin position="151"/>
        <end position="153"/>
    </location>
    <ligand>
        <name>CTP</name>
        <dbReference type="ChEBI" id="CHEBI:37563"/>
        <note>allosteric inhibitor</note>
    </ligand>
</feature>
<feature type="binding site" evidence="1">
    <location>
        <begin position="191"/>
        <end position="196"/>
    </location>
    <ligand>
        <name>CTP</name>
        <dbReference type="ChEBI" id="CHEBI:37563"/>
        <note>allosteric inhibitor</note>
    </ligand>
</feature>
<feature type="binding site" evidence="1">
    <location>
        <begin position="191"/>
        <end position="196"/>
    </location>
    <ligand>
        <name>UTP</name>
        <dbReference type="ChEBI" id="CHEBI:46398"/>
    </ligand>
</feature>
<feature type="binding site" evidence="1">
    <location>
        <position position="227"/>
    </location>
    <ligand>
        <name>CTP</name>
        <dbReference type="ChEBI" id="CHEBI:37563"/>
        <note>allosteric inhibitor</note>
    </ligand>
</feature>
<feature type="binding site" evidence="1">
    <location>
        <position position="227"/>
    </location>
    <ligand>
        <name>UTP</name>
        <dbReference type="ChEBI" id="CHEBI:46398"/>
    </ligand>
</feature>
<feature type="binding site" evidence="1">
    <location>
        <position position="356"/>
    </location>
    <ligand>
        <name>L-glutamine</name>
        <dbReference type="ChEBI" id="CHEBI:58359"/>
    </ligand>
</feature>
<feature type="binding site" evidence="1">
    <location>
        <begin position="384"/>
        <end position="387"/>
    </location>
    <ligand>
        <name>L-glutamine</name>
        <dbReference type="ChEBI" id="CHEBI:58359"/>
    </ligand>
</feature>
<feature type="binding site" evidence="1">
    <location>
        <position position="407"/>
    </location>
    <ligand>
        <name>L-glutamine</name>
        <dbReference type="ChEBI" id="CHEBI:58359"/>
    </ligand>
</feature>
<feature type="binding site" evidence="1">
    <location>
        <position position="462"/>
    </location>
    <ligand>
        <name>L-glutamine</name>
        <dbReference type="ChEBI" id="CHEBI:58359"/>
    </ligand>
</feature>
<reference key="1">
    <citation type="journal article" date="2005" name="Proc. Natl. Acad. Sci. U.S.A.">
        <title>The genome of the heartwater agent Ehrlichia ruminantium contains multiple tandem repeats of actively variable copy number.</title>
        <authorList>
            <person name="Collins N.E."/>
            <person name="Liebenberg J."/>
            <person name="de Villiers E.P."/>
            <person name="Brayton K.A."/>
            <person name="Louw E."/>
            <person name="Pretorius A."/>
            <person name="Faber F.E."/>
            <person name="van Heerden H."/>
            <person name="Josemans A."/>
            <person name="van Kleef M."/>
            <person name="Steyn H.C."/>
            <person name="van Strijp M.F."/>
            <person name="Zweygarth E."/>
            <person name="Jongejan F."/>
            <person name="Maillard J.C."/>
            <person name="Berthier D."/>
            <person name="Botha M."/>
            <person name="Joubert F."/>
            <person name="Corton C.H."/>
            <person name="Thomson N.R."/>
            <person name="Allsopp M.T."/>
            <person name="Allsopp B.A."/>
        </authorList>
    </citation>
    <scope>NUCLEOTIDE SEQUENCE [LARGE SCALE GENOMIC DNA]</scope>
    <source>
        <strain>Welgevonden</strain>
    </source>
</reference>
<reference key="2">
    <citation type="journal article" date="2006" name="J. Bacteriol.">
        <title>Comparative genomic analysis of three strains of Ehrlichia ruminantium reveals an active process of genome size plasticity.</title>
        <authorList>
            <person name="Frutos R."/>
            <person name="Viari A."/>
            <person name="Ferraz C."/>
            <person name="Morgat A."/>
            <person name="Eychenie S."/>
            <person name="Kandassamy Y."/>
            <person name="Chantal I."/>
            <person name="Bensaid A."/>
            <person name="Coissac E."/>
            <person name="Vachiery N."/>
            <person name="Demaille J."/>
            <person name="Martinez D."/>
        </authorList>
    </citation>
    <scope>NUCLEOTIDE SEQUENCE [LARGE SCALE GENOMIC DNA]</scope>
    <source>
        <strain>Welgevonden</strain>
    </source>
</reference>
<keyword id="KW-0067">ATP-binding</keyword>
<keyword id="KW-0315">Glutamine amidotransferase</keyword>
<keyword id="KW-0436">Ligase</keyword>
<keyword id="KW-0460">Magnesium</keyword>
<keyword id="KW-0479">Metal-binding</keyword>
<keyword id="KW-0547">Nucleotide-binding</keyword>
<keyword id="KW-0665">Pyrimidine biosynthesis</keyword>
<name>PYRG_EHRRW</name>
<proteinExistence type="inferred from homology"/>
<accession>Q5HC60</accession>
<accession>Q5FCS7</accession>
<gene>
    <name evidence="1" type="primary">pyrG</name>
    <name type="ordered locus">Erum1160</name>
    <name type="ordered locus">ERWE_CDS_01130</name>
</gene>
<sequence length="540" mass="60866">MNNLTSTKFIFVTGGVVSSLGKGLAAASIGALLQARGFKICLRKLDPYLNIDPGTMSPIQHGEVFVTDDGAETDLDLGHYERFTGVKTTKNDNITTGKVYHNLLSKERKGDYLGQTVQIIPHVTDLINSFILYNTDALDFVICEIGGTVGDIESQPFLESIRQIGYKLSKNNTVFVHLTLVPYISATMELKTKPTQHSVKELSSVGIQPDIILYRSKIPLSQEQRDKIANLCNVSPTNIIPALDVKNIYELPISYHQYNLDTQILKHFNITSPEPNLDKWENILNISHISTKTITIAIIGKYIKLLDAYKSLIEALEHAAIHNKTKLSIHWIDSRSLNNEITNTFDNVHAILIPGGFGDDGVEGKIIAIKYARINNIPFLGICMGMQLAIIEFVRNVIHLEDANSTEFNFYCKNPVIHQLPELQQNLGGSMKLGSHPCYLKVDSKIFSIYKEQVINERRRHRYTVNLQYKDLLESHGLIFTGHSHHNNNDSLAEVIELKNHPWFIGVQFHPEFKSDPFQSHPLFMSFVQASLNYQETKKA</sequence>
<dbReference type="EC" id="6.3.4.2" evidence="1"/>
<dbReference type="EMBL" id="CR767821">
    <property type="protein sequence ID" value="CAH57831.1"/>
    <property type="molecule type" value="Genomic_DNA"/>
</dbReference>
<dbReference type="EMBL" id="CR925678">
    <property type="protein sequence ID" value="CAI26607.1"/>
    <property type="molecule type" value="Genomic_DNA"/>
</dbReference>
<dbReference type="RefSeq" id="WP_011154800.1">
    <property type="nucleotide sequence ID" value="NC_005295.2"/>
</dbReference>
<dbReference type="SMR" id="Q5HC60"/>
<dbReference type="GeneID" id="33058423"/>
<dbReference type="KEGG" id="eru:Erum1160"/>
<dbReference type="KEGG" id="erw:ERWE_CDS_01130"/>
<dbReference type="eggNOG" id="COG0504">
    <property type="taxonomic scope" value="Bacteria"/>
</dbReference>
<dbReference type="HOGENOM" id="CLU_011675_5_0_5"/>
<dbReference type="UniPathway" id="UPA00159">
    <property type="reaction ID" value="UER00277"/>
</dbReference>
<dbReference type="Proteomes" id="UP000001021">
    <property type="component" value="Chromosome"/>
</dbReference>
<dbReference type="GO" id="GO:0097268">
    <property type="term" value="C:cytoophidium"/>
    <property type="evidence" value="ECO:0007669"/>
    <property type="project" value="TreeGrafter"/>
</dbReference>
<dbReference type="GO" id="GO:0005737">
    <property type="term" value="C:cytoplasm"/>
    <property type="evidence" value="ECO:0007669"/>
    <property type="project" value="TreeGrafter"/>
</dbReference>
<dbReference type="GO" id="GO:0005524">
    <property type="term" value="F:ATP binding"/>
    <property type="evidence" value="ECO:0007669"/>
    <property type="project" value="UniProtKB-KW"/>
</dbReference>
<dbReference type="GO" id="GO:0003883">
    <property type="term" value="F:CTP synthase activity"/>
    <property type="evidence" value="ECO:0007669"/>
    <property type="project" value="UniProtKB-UniRule"/>
</dbReference>
<dbReference type="GO" id="GO:0004359">
    <property type="term" value="F:glutaminase activity"/>
    <property type="evidence" value="ECO:0007669"/>
    <property type="project" value="RHEA"/>
</dbReference>
<dbReference type="GO" id="GO:0042802">
    <property type="term" value="F:identical protein binding"/>
    <property type="evidence" value="ECO:0007669"/>
    <property type="project" value="TreeGrafter"/>
</dbReference>
<dbReference type="GO" id="GO:0046872">
    <property type="term" value="F:metal ion binding"/>
    <property type="evidence" value="ECO:0007669"/>
    <property type="project" value="UniProtKB-KW"/>
</dbReference>
<dbReference type="GO" id="GO:0044210">
    <property type="term" value="P:'de novo' CTP biosynthetic process"/>
    <property type="evidence" value="ECO:0007669"/>
    <property type="project" value="UniProtKB-UniRule"/>
</dbReference>
<dbReference type="GO" id="GO:0019856">
    <property type="term" value="P:pyrimidine nucleobase biosynthetic process"/>
    <property type="evidence" value="ECO:0007669"/>
    <property type="project" value="TreeGrafter"/>
</dbReference>
<dbReference type="CDD" id="cd03113">
    <property type="entry name" value="CTPS_N"/>
    <property type="match status" value="1"/>
</dbReference>
<dbReference type="CDD" id="cd01746">
    <property type="entry name" value="GATase1_CTP_Synthase"/>
    <property type="match status" value="1"/>
</dbReference>
<dbReference type="FunFam" id="3.40.50.300:FF:000009">
    <property type="entry name" value="CTP synthase"/>
    <property type="match status" value="1"/>
</dbReference>
<dbReference type="FunFam" id="3.40.50.880:FF:000002">
    <property type="entry name" value="CTP synthase"/>
    <property type="match status" value="1"/>
</dbReference>
<dbReference type="Gene3D" id="3.40.50.880">
    <property type="match status" value="1"/>
</dbReference>
<dbReference type="Gene3D" id="3.40.50.300">
    <property type="entry name" value="P-loop containing nucleotide triphosphate hydrolases"/>
    <property type="match status" value="1"/>
</dbReference>
<dbReference type="HAMAP" id="MF_01227">
    <property type="entry name" value="PyrG"/>
    <property type="match status" value="1"/>
</dbReference>
<dbReference type="InterPro" id="IPR029062">
    <property type="entry name" value="Class_I_gatase-like"/>
</dbReference>
<dbReference type="InterPro" id="IPR004468">
    <property type="entry name" value="CTP_synthase"/>
</dbReference>
<dbReference type="InterPro" id="IPR017456">
    <property type="entry name" value="CTP_synthase_N"/>
</dbReference>
<dbReference type="InterPro" id="IPR017926">
    <property type="entry name" value="GATASE"/>
</dbReference>
<dbReference type="InterPro" id="IPR033828">
    <property type="entry name" value="GATase1_CTP_Synthase"/>
</dbReference>
<dbReference type="InterPro" id="IPR027417">
    <property type="entry name" value="P-loop_NTPase"/>
</dbReference>
<dbReference type="NCBIfam" id="NF003792">
    <property type="entry name" value="PRK05380.1"/>
    <property type="match status" value="1"/>
</dbReference>
<dbReference type="NCBIfam" id="TIGR00337">
    <property type="entry name" value="PyrG"/>
    <property type="match status" value="1"/>
</dbReference>
<dbReference type="PANTHER" id="PTHR11550">
    <property type="entry name" value="CTP SYNTHASE"/>
    <property type="match status" value="1"/>
</dbReference>
<dbReference type="PANTHER" id="PTHR11550:SF0">
    <property type="entry name" value="CTP SYNTHASE-RELATED"/>
    <property type="match status" value="1"/>
</dbReference>
<dbReference type="Pfam" id="PF06418">
    <property type="entry name" value="CTP_synth_N"/>
    <property type="match status" value="1"/>
</dbReference>
<dbReference type="Pfam" id="PF00117">
    <property type="entry name" value="GATase"/>
    <property type="match status" value="1"/>
</dbReference>
<dbReference type="SUPFAM" id="SSF52317">
    <property type="entry name" value="Class I glutamine amidotransferase-like"/>
    <property type="match status" value="1"/>
</dbReference>
<dbReference type="SUPFAM" id="SSF52540">
    <property type="entry name" value="P-loop containing nucleoside triphosphate hydrolases"/>
    <property type="match status" value="1"/>
</dbReference>
<dbReference type="PROSITE" id="PS51273">
    <property type="entry name" value="GATASE_TYPE_1"/>
    <property type="match status" value="1"/>
</dbReference>
<protein>
    <recommendedName>
        <fullName evidence="1">CTP synthase</fullName>
        <ecNumber evidence="1">6.3.4.2</ecNumber>
    </recommendedName>
    <alternativeName>
        <fullName evidence="1">Cytidine 5'-triphosphate synthase</fullName>
    </alternativeName>
    <alternativeName>
        <fullName evidence="1">Cytidine triphosphate synthetase</fullName>
        <shortName evidence="1">CTP synthetase</shortName>
        <shortName evidence="1">CTPS</shortName>
    </alternativeName>
    <alternativeName>
        <fullName evidence="1">UTP--ammonia ligase</fullName>
    </alternativeName>
</protein>
<evidence type="ECO:0000255" key="1">
    <source>
        <dbReference type="HAMAP-Rule" id="MF_01227"/>
    </source>
</evidence>
<organism>
    <name type="scientific">Ehrlichia ruminantium (strain Welgevonden)</name>
    <dbReference type="NCBI Taxonomy" id="254945"/>
    <lineage>
        <taxon>Bacteria</taxon>
        <taxon>Pseudomonadati</taxon>
        <taxon>Pseudomonadota</taxon>
        <taxon>Alphaproteobacteria</taxon>
        <taxon>Rickettsiales</taxon>
        <taxon>Anaplasmataceae</taxon>
        <taxon>Ehrlichia</taxon>
    </lineage>
</organism>
<comment type="function">
    <text evidence="1">Catalyzes the ATP-dependent amination of UTP to CTP with either L-glutamine or ammonia as the source of nitrogen. Regulates intracellular CTP levels through interactions with the four ribonucleotide triphosphates.</text>
</comment>
<comment type="catalytic activity">
    <reaction evidence="1">
        <text>UTP + L-glutamine + ATP + H2O = CTP + L-glutamate + ADP + phosphate + 2 H(+)</text>
        <dbReference type="Rhea" id="RHEA:26426"/>
        <dbReference type="ChEBI" id="CHEBI:15377"/>
        <dbReference type="ChEBI" id="CHEBI:15378"/>
        <dbReference type="ChEBI" id="CHEBI:29985"/>
        <dbReference type="ChEBI" id="CHEBI:30616"/>
        <dbReference type="ChEBI" id="CHEBI:37563"/>
        <dbReference type="ChEBI" id="CHEBI:43474"/>
        <dbReference type="ChEBI" id="CHEBI:46398"/>
        <dbReference type="ChEBI" id="CHEBI:58359"/>
        <dbReference type="ChEBI" id="CHEBI:456216"/>
        <dbReference type="EC" id="6.3.4.2"/>
    </reaction>
</comment>
<comment type="catalytic activity">
    <reaction evidence="1">
        <text>L-glutamine + H2O = L-glutamate + NH4(+)</text>
        <dbReference type="Rhea" id="RHEA:15889"/>
        <dbReference type="ChEBI" id="CHEBI:15377"/>
        <dbReference type="ChEBI" id="CHEBI:28938"/>
        <dbReference type="ChEBI" id="CHEBI:29985"/>
        <dbReference type="ChEBI" id="CHEBI:58359"/>
    </reaction>
</comment>
<comment type="catalytic activity">
    <reaction evidence="1">
        <text>UTP + NH4(+) + ATP = CTP + ADP + phosphate + 2 H(+)</text>
        <dbReference type="Rhea" id="RHEA:16597"/>
        <dbReference type="ChEBI" id="CHEBI:15378"/>
        <dbReference type="ChEBI" id="CHEBI:28938"/>
        <dbReference type="ChEBI" id="CHEBI:30616"/>
        <dbReference type="ChEBI" id="CHEBI:37563"/>
        <dbReference type="ChEBI" id="CHEBI:43474"/>
        <dbReference type="ChEBI" id="CHEBI:46398"/>
        <dbReference type="ChEBI" id="CHEBI:456216"/>
    </reaction>
</comment>
<comment type="activity regulation">
    <text evidence="1">Allosterically activated by GTP, when glutamine is the substrate; GTP has no effect on the reaction when ammonia is the substrate. The allosteric effector GTP functions by stabilizing the protein conformation that binds the tetrahedral intermediate(s) formed during glutamine hydrolysis. Inhibited by the product CTP, via allosteric rather than competitive inhibition.</text>
</comment>
<comment type="pathway">
    <text evidence="1">Pyrimidine metabolism; CTP biosynthesis via de novo pathway; CTP from UDP: step 2/2.</text>
</comment>
<comment type="subunit">
    <text evidence="1">Homotetramer.</text>
</comment>
<comment type="miscellaneous">
    <text evidence="1">CTPSs have evolved a hybrid strategy for distinguishing between UTP and CTP. The overlapping regions of the product feedback inhibitory and substrate sites recognize a common feature in both compounds, the triphosphate moiety. To differentiate isosteric substrate and product pyrimidine rings, an additional pocket far from the expected kinase/ligase catalytic site, specifically recognizes the cytosine and ribose portions of the product inhibitor.</text>
</comment>
<comment type="similarity">
    <text evidence="1">Belongs to the CTP synthase family.</text>
</comment>